<evidence type="ECO:0000255" key="1">
    <source>
        <dbReference type="HAMAP-Rule" id="MF_01369"/>
    </source>
</evidence>
<evidence type="ECO:0000305" key="2"/>
<keyword id="KW-1185">Reference proteome</keyword>
<keyword id="KW-0687">Ribonucleoprotein</keyword>
<keyword id="KW-0689">Ribosomal protein</keyword>
<keyword id="KW-0694">RNA-binding</keyword>
<keyword id="KW-0699">rRNA-binding</keyword>
<gene>
    <name evidence="1" type="primary">rplW</name>
    <name type="ordered locus">EUBELI_00301</name>
</gene>
<name>RL23_LACE2</name>
<reference key="1">
    <citation type="journal article" date="2009" name="Proc. Natl. Acad. Sci. U.S.A.">
        <title>Characterizing a model human gut microbiota composed of members of its two dominant bacterial phyla.</title>
        <authorList>
            <person name="Mahowald M.A."/>
            <person name="Rey F.E."/>
            <person name="Seedorf H."/>
            <person name="Turnbaugh P.J."/>
            <person name="Fulton R.S."/>
            <person name="Wollam A."/>
            <person name="Shah N."/>
            <person name="Wang C."/>
            <person name="Magrini V."/>
            <person name="Wilson R.K."/>
            <person name="Cantarel B.L."/>
            <person name="Coutinho P.M."/>
            <person name="Henrissat B."/>
            <person name="Crock L.W."/>
            <person name="Russell A."/>
            <person name="Verberkmoes N.C."/>
            <person name="Hettich R.L."/>
            <person name="Gordon J.I."/>
        </authorList>
    </citation>
    <scope>NUCLEOTIDE SEQUENCE [LARGE SCALE GENOMIC DNA]</scope>
    <source>
        <strain>ATCC 27750 / DSM 3376 / VPI C15-48 / C15-B4</strain>
    </source>
</reference>
<accession>C4Z2T2</accession>
<proteinExistence type="inferred from homology"/>
<dbReference type="EMBL" id="CP001104">
    <property type="protein sequence ID" value="ACR71337.1"/>
    <property type="molecule type" value="Genomic_DNA"/>
</dbReference>
<dbReference type="RefSeq" id="WP_012738574.1">
    <property type="nucleotide sequence ID" value="NC_012778.1"/>
</dbReference>
<dbReference type="SMR" id="C4Z2T2"/>
<dbReference type="STRING" id="515620.EUBELI_00301"/>
<dbReference type="GeneID" id="41355074"/>
<dbReference type="KEGG" id="eel:EUBELI_00301"/>
<dbReference type="eggNOG" id="COG0089">
    <property type="taxonomic scope" value="Bacteria"/>
</dbReference>
<dbReference type="HOGENOM" id="CLU_037562_3_2_9"/>
<dbReference type="Proteomes" id="UP000001476">
    <property type="component" value="Chromosome"/>
</dbReference>
<dbReference type="GO" id="GO:1990904">
    <property type="term" value="C:ribonucleoprotein complex"/>
    <property type="evidence" value="ECO:0007669"/>
    <property type="project" value="UniProtKB-KW"/>
</dbReference>
<dbReference type="GO" id="GO:0005840">
    <property type="term" value="C:ribosome"/>
    <property type="evidence" value="ECO:0007669"/>
    <property type="project" value="UniProtKB-KW"/>
</dbReference>
<dbReference type="GO" id="GO:0019843">
    <property type="term" value="F:rRNA binding"/>
    <property type="evidence" value="ECO:0007669"/>
    <property type="project" value="UniProtKB-UniRule"/>
</dbReference>
<dbReference type="GO" id="GO:0003735">
    <property type="term" value="F:structural constituent of ribosome"/>
    <property type="evidence" value="ECO:0007669"/>
    <property type="project" value="InterPro"/>
</dbReference>
<dbReference type="GO" id="GO:0006412">
    <property type="term" value="P:translation"/>
    <property type="evidence" value="ECO:0007669"/>
    <property type="project" value="UniProtKB-UniRule"/>
</dbReference>
<dbReference type="FunFam" id="3.30.70.330:FF:000001">
    <property type="entry name" value="50S ribosomal protein L23"/>
    <property type="match status" value="1"/>
</dbReference>
<dbReference type="Gene3D" id="3.30.70.330">
    <property type="match status" value="1"/>
</dbReference>
<dbReference type="HAMAP" id="MF_01369_B">
    <property type="entry name" value="Ribosomal_uL23_B"/>
    <property type="match status" value="1"/>
</dbReference>
<dbReference type="InterPro" id="IPR012677">
    <property type="entry name" value="Nucleotide-bd_a/b_plait_sf"/>
</dbReference>
<dbReference type="InterPro" id="IPR013025">
    <property type="entry name" value="Ribosomal_uL23-like"/>
</dbReference>
<dbReference type="InterPro" id="IPR012678">
    <property type="entry name" value="Ribosomal_uL23/eL15/eS24_sf"/>
</dbReference>
<dbReference type="NCBIfam" id="NF004363">
    <property type="entry name" value="PRK05738.2-4"/>
    <property type="match status" value="1"/>
</dbReference>
<dbReference type="PANTHER" id="PTHR11620">
    <property type="entry name" value="60S RIBOSOMAL PROTEIN L23A"/>
    <property type="match status" value="1"/>
</dbReference>
<dbReference type="Pfam" id="PF00276">
    <property type="entry name" value="Ribosomal_L23"/>
    <property type="match status" value="1"/>
</dbReference>
<dbReference type="SUPFAM" id="SSF54189">
    <property type="entry name" value="Ribosomal proteins S24e, L23 and L15e"/>
    <property type="match status" value="1"/>
</dbReference>
<organism>
    <name type="scientific">Lachnospira eligens (strain ATCC 27750 / DSM 3376 / VPI C15-48 / C15-B4)</name>
    <name type="common">Eubacterium eligens</name>
    <dbReference type="NCBI Taxonomy" id="515620"/>
    <lineage>
        <taxon>Bacteria</taxon>
        <taxon>Bacillati</taxon>
        <taxon>Bacillota</taxon>
        <taxon>Clostridia</taxon>
        <taxon>Lachnospirales</taxon>
        <taxon>Lachnospiraceae</taxon>
        <taxon>Lachnospira</taxon>
    </lineage>
</organism>
<feature type="chain" id="PRO_1000215033" description="Large ribosomal subunit protein uL23">
    <location>
        <begin position="1"/>
        <end position="99"/>
    </location>
</feature>
<comment type="function">
    <text evidence="1">One of the early assembly proteins it binds 23S rRNA. One of the proteins that surrounds the polypeptide exit tunnel on the outside of the ribosome. Forms the main docking site for trigger factor binding to the ribosome.</text>
</comment>
<comment type="subunit">
    <text evidence="1">Part of the 50S ribosomal subunit. Contacts protein L29, and trigger factor when it is bound to the ribosome.</text>
</comment>
<comment type="similarity">
    <text evidence="1">Belongs to the universal ribosomal protein uL23 family.</text>
</comment>
<protein>
    <recommendedName>
        <fullName evidence="1">Large ribosomal subunit protein uL23</fullName>
    </recommendedName>
    <alternativeName>
        <fullName evidence="2">50S ribosomal protein L23</fullName>
    </alternativeName>
</protein>
<sequence>MANVQYYDVILKPVITEKSMADMADKKYTFLVHTDANKTMIKDAVEKMFEGTKVASVNTMNLDGKKKRRGRTAGTTSKTKKAIVQLTADSKEIEIFEGL</sequence>